<evidence type="ECO:0000255" key="1">
    <source>
        <dbReference type="HAMAP-Rule" id="MF_00008"/>
    </source>
</evidence>
<keyword id="KW-0963">Cytoplasm</keyword>
<keyword id="KW-0489">Methyltransferase</keyword>
<keyword id="KW-0545">Nucleotide biosynthesis</keyword>
<keyword id="KW-0808">Transferase</keyword>
<accession>A1W5A4</accession>
<organism>
    <name type="scientific">Acidovorax sp. (strain JS42)</name>
    <dbReference type="NCBI Taxonomy" id="232721"/>
    <lineage>
        <taxon>Bacteria</taxon>
        <taxon>Pseudomonadati</taxon>
        <taxon>Pseudomonadota</taxon>
        <taxon>Betaproteobacteria</taxon>
        <taxon>Burkholderiales</taxon>
        <taxon>Comamonadaceae</taxon>
        <taxon>Acidovorax</taxon>
    </lineage>
</organism>
<comment type="function">
    <text evidence="1">Catalyzes the reductive methylation of 2'-deoxyuridine-5'-monophosphate (dUMP) to 2'-deoxythymidine-5'-monophosphate (dTMP) while utilizing 5,10-methylenetetrahydrofolate (mTHF) as the methyl donor and reductant in the reaction, yielding dihydrofolate (DHF) as a by-product. This enzymatic reaction provides an intracellular de novo source of dTMP, an essential precursor for DNA biosynthesis.</text>
</comment>
<comment type="catalytic activity">
    <reaction evidence="1">
        <text>dUMP + (6R)-5,10-methylene-5,6,7,8-tetrahydrofolate = 7,8-dihydrofolate + dTMP</text>
        <dbReference type="Rhea" id="RHEA:12104"/>
        <dbReference type="ChEBI" id="CHEBI:15636"/>
        <dbReference type="ChEBI" id="CHEBI:57451"/>
        <dbReference type="ChEBI" id="CHEBI:63528"/>
        <dbReference type="ChEBI" id="CHEBI:246422"/>
        <dbReference type="EC" id="2.1.1.45"/>
    </reaction>
</comment>
<comment type="pathway">
    <text evidence="1">Pyrimidine metabolism; dTTP biosynthesis.</text>
</comment>
<comment type="subunit">
    <text evidence="1">Homodimer.</text>
</comment>
<comment type="subcellular location">
    <subcellularLocation>
        <location evidence="1">Cytoplasm</location>
    </subcellularLocation>
</comment>
<comment type="similarity">
    <text evidence="1">Belongs to the thymidylate synthase family. Bacterial-type ThyA subfamily.</text>
</comment>
<dbReference type="EC" id="2.1.1.45" evidence="1"/>
<dbReference type="EMBL" id="CP000539">
    <property type="protein sequence ID" value="ABM41429.1"/>
    <property type="molecule type" value="Genomic_DNA"/>
</dbReference>
<dbReference type="SMR" id="A1W5A4"/>
<dbReference type="STRING" id="232721.Ajs_1197"/>
<dbReference type="KEGG" id="ajs:Ajs_1197"/>
<dbReference type="eggNOG" id="COG0207">
    <property type="taxonomic scope" value="Bacteria"/>
</dbReference>
<dbReference type="HOGENOM" id="CLU_021669_0_0_4"/>
<dbReference type="UniPathway" id="UPA00575"/>
<dbReference type="Proteomes" id="UP000000645">
    <property type="component" value="Chromosome"/>
</dbReference>
<dbReference type="GO" id="GO:0005829">
    <property type="term" value="C:cytosol"/>
    <property type="evidence" value="ECO:0007669"/>
    <property type="project" value="TreeGrafter"/>
</dbReference>
<dbReference type="GO" id="GO:0004799">
    <property type="term" value="F:thymidylate synthase activity"/>
    <property type="evidence" value="ECO:0007669"/>
    <property type="project" value="UniProtKB-UniRule"/>
</dbReference>
<dbReference type="GO" id="GO:0006231">
    <property type="term" value="P:dTMP biosynthetic process"/>
    <property type="evidence" value="ECO:0007669"/>
    <property type="project" value="UniProtKB-UniRule"/>
</dbReference>
<dbReference type="GO" id="GO:0006235">
    <property type="term" value="P:dTTP biosynthetic process"/>
    <property type="evidence" value="ECO:0007669"/>
    <property type="project" value="UniProtKB-UniRule"/>
</dbReference>
<dbReference type="GO" id="GO:0032259">
    <property type="term" value="P:methylation"/>
    <property type="evidence" value="ECO:0007669"/>
    <property type="project" value="UniProtKB-KW"/>
</dbReference>
<dbReference type="CDD" id="cd00351">
    <property type="entry name" value="TS_Pyrimidine_HMase"/>
    <property type="match status" value="1"/>
</dbReference>
<dbReference type="FunFam" id="3.30.572.10:FF:000001">
    <property type="entry name" value="Thymidylate synthase"/>
    <property type="match status" value="1"/>
</dbReference>
<dbReference type="Gene3D" id="3.30.572.10">
    <property type="entry name" value="Thymidylate synthase/dCMP hydroxymethylase domain"/>
    <property type="match status" value="1"/>
</dbReference>
<dbReference type="HAMAP" id="MF_00008">
    <property type="entry name" value="Thymidy_synth_bact"/>
    <property type="match status" value="1"/>
</dbReference>
<dbReference type="InterPro" id="IPR045097">
    <property type="entry name" value="Thymidate_synth/dCMP_Mease"/>
</dbReference>
<dbReference type="InterPro" id="IPR023451">
    <property type="entry name" value="Thymidate_synth/dCMP_Mease_dom"/>
</dbReference>
<dbReference type="InterPro" id="IPR036926">
    <property type="entry name" value="Thymidate_synth/dCMP_Mease_sf"/>
</dbReference>
<dbReference type="InterPro" id="IPR000398">
    <property type="entry name" value="Thymidylate_synthase"/>
</dbReference>
<dbReference type="InterPro" id="IPR020940">
    <property type="entry name" value="Thymidylate_synthase_AS"/>
</dbReference>
<dbReference type="NCBIfam" id="NF002497">
    <property type="entry name" value="PRK01827.1-3"/>
    <property type="match status" value="1"/>
</dbReference>
<dbReference type="NCBIfam" id="NF002499">
    <property type="entry name" value="PRK01827.1-5"/>
    <property type="match status" value="1"/>
</dbReference>
<dbReference type="NCBIfam" id="TIGR03284">
    <property type="entry name" value="thym_sym"/>
    <property type="match status" value="2"/>
</dbReference>
<dbReference type="PANTHER" id="PTHR11548">
    <property type="entry name" value="THYMIDYLATE SYNTHASE 1"/>
    <property type="match status" value="1"/>
</dbReference>
<dbReference type="PANTHER" id="PTHR11548:SF1">
    <property type="entry name" value="THYMIDYLATE SYNTHASE 1"/>
    <property type="match status" value="1"/>
</dbReference>
<dbReference type="Pfam" id="PF00303">
    <property type="entry name" value="Thymidylat_synt"/>
    <property type="match status" value="1"/>
</dbReference>
<dbReference type="PRINTS" id="PR00108">
    <property type="entry name" value="THYMDSNTHASE"/>
</dbReference>
<dbReference type="SUPFAM" id="SSF55831">
    <property type="entry name" value="Thymidylate synthase/dCMP hydroxymethylase"/>
    <property type="match status" value="1"/>
</dbReference>
<dbReference type="PROSITE" id="PS00091">
    <property type="entry name" value="THYMIDYLATE_SYNTHASE"/>
    <property type="match status" value="1"/>
</dbReference>
<feature type="chain" id="PRO_0000321464" description="Thymidylate synthase">
    <location>
        <begin position="1"/>
        <end position="277"/>
    </location>
</feature>
<feature type="active site" description="Nucleophile" evidence="1">
    <location>
        <position position="152"/>
    </location>
</feature>
<feature type="binding site" description="in other chain" evidence="1">
    <location>
        <position position="27"/>
    </location>
    <ligand>
        <name>dUMP</name>
        <dbReference type="ChEBI" id="CHEBI:246422"/>
        <note>ligand shared between dimeric partners</note>
    </ligand>
</feature>
<feature type="binding site" evidence="1">
    <location>
        <position position="57"/>
    </location>
    <ligand>
        <name>(6R)-5,10-methylene-5,6,7,8-tetrahydrofolate</name>
        <dbReference type="ChEBI" id="CHEBI:15636"/>
    </ligand>
</feature>
<feature type="binding site" evidence="1">
    <location>
        <begin position="132"/>
        <end position="133"/>
    </location>
    <ligand>
        <name>dUMP</name>
        <dbReference type="ChEBI" id="CHEBI:246422"/>
        <note>ligand shared between dimeric partners</note>
    </ligand>
</feature>
<feature type="binding site" description="in other chain" evidence="1">
    <location>
        <begin position="179"/>
        <end position="182"/>
    </location>
    <ligand>
        <name>dUMP</name>
        <dbReference type="ChEBI" id="CHEBI:246422"/>
        <note>ligand shared between dimeric partners</note>
    </ligand>
</feature>
<feature type="binding site" evidence="1">
    <location>
        <position position="182"/>
    </location>
    <ligand>
        <name>(6R)-5,10-methylene-5,6,7,8-tetrahydrofolate</name>
        <dbReference type="ChEBI" id="CHEBI:15636"/>
    </ligand>
</feature>
<feature type="binding site" description="in other chain" evidence="1">
    <location>
        <position position="190"/>
    </location>
    <ligand>
        <name>dUMP</name>
        <dbReference type="ChEBI" id="CHEBI:246422"/>
        <note>ligand shared between dimeric partners</note>
    </ligand>
</feature>
<feature type="binding site" description="in other chain" evidence="1">
    <location>
        <begin position="220"/>
        <end position="222"/>
    </location>
    <ligand>
        <name>dUMP</name>
        <dbReference type="ChEBI" id="CHEBI:246422"/>
        <note>ligand shared between dimeric partners</note>
    </ligand>
</feature>
<feature type="binding site" evidence="1">
    <location>
        <position position="276"/>
    </location>
    <ligand>
        <name>(6R)-5,10-methylene-5,6,7,8-tetrahydrofolate</name>
        <dbReference type="ChEBI" id="CHEBI:15636"/>
    </ligand>
</feature>
<proteinExistence type="inferred from homology"/>
<sequence length="277" mass="31748">MTPRPIRHQYEDLMRHVFEHGTAKGDRTGTGTKSVFGHQMRFDLSEGFPLVTTKKVHLKSIILELLWFLRGDSNVRWLQERGCTIWDEWARDDGSLGPVYGVQWRSWPTPDGGHIDQIQQVIDTLKTHPDSRRIIVSAWNVAELDRMALMPCHAFFQFYVAPSQVAGEPGKLSCQLYQRSADIFLGVPFNIASYALLTHMVAQQCDLQVGDFIWTGGDCHIYSNHFEQVRTQLARQPYAYPTLQIKRRPASIFDYAYEDFEVVGYEHHPAIKAPVAV</sequence>
<protein>
    <recommendedName>
        <fullName evidence="1">Thymidylate synthase</fullName>
        <shortName evidence="1">TS</shortName>
        <shortName evidence="1">TSase</shortName>
        <ecNumber evidence="1">2.1.1.45</ecNumber>
    </recommendedName>
</protein>
<gene>
    <name evidence="1" type="primary">thyA</name>
    <name type="ordered locus">Ajs_1197</name>
</gene>
<name>TYSY_ACISJ</name>
<reference key="1">
    <citation type="submission" date="2006-12" db="EMBL/GenBank/DDBJ databases">
        <title>Complete sequence of chromosome 1 of Acidovorax sp. JS42.</title>
        <authorList>
            <person name="Copeland A."/>
            <person name="Lucas S."/>
            <person name="Lapidus A."/>
            <person name="Barry K."/>
            <person name="Detter J.C."/>
            <person name="Glavina del Rio T."/>
            <person name="Dalin E."/>
            <person name="Tice H."/>
            <person name="Pitluck S."/>
            <person name="Chertkov O."/>
            <person name="Brettin T."/>
            <person name="Bruce D."/>
            <person name="Han C."/>
            <person name="Tapia R."/>
            <person name="Gilna P."/>
            <person name="Schmutz J."/>
            <person name="Larimer F."/>
            <person name="Land M."/>
            <person name="Hauser L."/>
            <person name="Kyrpides N."/>
            <person name="Kim E."/>
            <person name="Stahl D."/>
            <person name="Richardson P."/>
        </authorList>
    </citation>
    <scope>NUCLEOTIDE SEQUENCE [LARGE SCALE GENOMIC DNA]</scope>
    <source>
        <strain>JS42</strain>
    </source>
</reference>